<name>SURE_ECOLI</name>
<organism>
    <name type="scientific">Escherichia coli (strain K12)</name>
    <dbReference type="NCBI Taxonomy" id="83333"/>
    <lineage>
        <taxon>Bacteria</taxon>
        <taxon>Pseudomonadati</taxon>
        <taxon>Pseudomonadota</taxon>
        <taxon>Gammaproteobacteria</taxon>
        <taxon>Enterobacterales</taxon>
        <taxon>Enterobacteriaceae</taxon>
        <taxon>Escherichia</taxon>
    </lineage>
</organism>
<accession>P0A840</accession>
<accession>P36664</accession>
<accession>Q2MA85</accession>
<evidence type="ECO:0000255" key="1">
    <source>
        <dbReference type="HAMAP-Rule" id="MF_00060"/>
    </source>
</evidence>
<evidence type="ECO:0000269" key="2">
    <source>
    </source>
</evidence>
<evidence type="ECO:0000303" key="3">
    <source>
    </source>
</evidence>
<evidence type="ECO:0000305" key="4"/>
<comment type="function">
    <text evidence="2 3">Nucleotidase with a broad substrate specificity as it can dephosphorylate various ribo- and deoxyribonucleoside 5'-monophosphates and ribonucleoside 3'-monophosphates with highest affinity to 3'-AMP (PubMed:15489502). Also hydrolyzes polyphosphate (exopolyphosphatase activity) with the preference for short-chain-length substrates (P20-25) (PubMed:15489502). Might be involved in the regulation of dNTP and NTP pools, and in the turnover of 3'-mononucleotides produced by numerous intracellular RNases (T1, T2, and F) during the degradation of various RNAs (PubMed:15489502). Also plays a significant physiological role in stress-response and is required for the survival of E.coli in stationary growth phase (PubMed:15489502).</text>
</comment>
<comment type="catalytic activity">
    <reaction evidence="2">
        <text>a ribonucleoside 5'-phosphate + H2O = a ribonucleoside + phosphate</text>
        <dbReference type="Rhea" id="RHEA:12484"/>
        <dbReference type="ChEBI" id="CHEBI:15377"/>
        <dbReference type="ChEBI" id="CHEBI:18254"/>
        <dbReference type="ChEBI" id="CHEBI:43474"/>
        <dbReference type="ChEBI" id="CHEBI:58043"/>
        <dbReference type="EC" id="3.1.3.5"/>
    </reaction>
</comment>
<comment type="catalytic activity">
    <reaction evidence="2">
        <text>a ribonucleoside 3'-phosphate + H2O = a ribonucleoside + phosphate</text>
        <dbReference type="Rhea" id="RHEA:10144"/>
        <dbReference type="ChEBI" id="CHEBI:13197"/>
        <dbReference type="ChEBI" id="CHEBI:15377"/>
        <dbReference type="ChEBI" id="CHEBI:18254"/>
        <dbReference type="ChEBI" id="CHEBI:43474"/>
        <dbReference type="EC" id="3.1.3.6"/>
    </reaction>
</comment>
<comment type="catalytic activity">
    <reaction evidence="2">
        <text>[phosphate](n) + H2O = [phosphate](n-1) + phosphate + H(+)</text>
        <dbReference type="Rhea" id="RHEA:21528"/>
        <dbReference type="Rhea" id="RHEA-COMP:9859"/>
        <dbReference type="Rhea" id="RHEA-COMP:14279"/>
        <dbReference type="ChEBI" id="CHEBI:15377"/>
        <dbReference type="ChEBI" id="CHEBI:15378"/>
        <dbReference type="ChEBI" id="CHEBI:16838"/>
        <dbReference type="ChEBI" id="CHEBI:43474"/>
        <dbReference type="EC" id="3.6.1.11"/>
    </reaction>
</comment>
<comment type="catalytic activity">
    <reaction evidence="2">
        <text>AMP + H2O = adenosine + phosphate</text>
        <dbReference type="Rhea" id="RHEA:29375"/>
        <dbReference type="ChEBI" id="CHEBI:15377"/>
        <dbReference type="ChEBI" id="CHEBI:16335"/>
        <dbReference type="ChEBI" id="CHEBI:43474"/>
        <dbReference type="ChEBI" id="CHEBI:456215"/>
    </reaction>
</comment>
<comment type="catalytic activity">
    <reaction evidence="2">
        <text>GMP + H2O = guanosine + phosphate</text>
        <dbReference type="Rhea" id="RHEA:27714"/>
        <dbReference type="ChEBI" id="CHEBI:15377"/>
        <dbReference type="ChEBI" id="CHEBI:16750"/>
        <dbReference type="ChEBI" id="CHEBI:43474"/>
        <dbReference type="ChEBI" id="CHEBI:58115"/>
    </reaction>
</comment>
<comment type="catalytic activity">
    <reaction evidence="2">
        <text>dGMP + H2O = 2'-deoxyguanosine + phosphate</text>
        <dbReference type="Rhea" id="RHEA:29379"/>
        <dbReference type="ChEBI" id="CHEBI:15377"/>
        <dbReference type="ChEBI" id="CHEBI:17172"/>
        <dbReference type="ChEBI" id="CHEBI:43474"/>
        <dbReference type="ChEBI" id="CHEBI:57673"/>
    </reaction>
</comment>
<comment type="catalytic activity">
    <reaction evidence="2">
        <text>3'-AMP + H2O = adenosine + phosphate</text>
        <dbReference type="Rhea" id="RHEA:27898"/>
        <dbReference type="ChEBI" id="CHEBI:15377"/>
        <dbReference type="ChEBI" id="CHEBI:16335"/>
        <dbReference type="ChEBI" id="CHEBI:43474"/>
        <dbReference type="ChEBI" id="CHEBI:60880"/>
    </reaction>
</comment>
<comment type="catalytic activity">
    <reaction evidence="2">
        <text>3'-CMP + H2O = cytidine + phosphate</text>
        <dbReference type="Rhea" id="RHEA:27894"/>
        <dbReference type="ChEBI" id="CHEBI:15377"/>
        <dbReference type="ChEBI" id="CHEBI:17562"/>
        <dbReference type="ChEBI" id="CHEBI:43474"/>
        <dbReference type="ChEBI" id="CHEBI:60875"/>
    </reaction>
</comment>
<comment type="cofactor">
    <cofactor evidence="2">
        <name>Mn(2+)</name>
        <dbReference type="ChEBI" id="CHEBI:29035"/>
    </cofactor>
    <cofactor evidence="2">
        <name>Co(2+)</name>
        <dbReference type="ChEBI" id="CHEBI:48828"/>
    </cofactor>
    <cofactor evidence="2">
        <name>Ni(2+)</name>
        <dbReference type="ChEBI" id="CHEBI:49786"/>
    </cofactor>
    <cofactor evidence="2">
        <name>Mg(2+)</name>
        <dbReference type="ChEBI" id="CHEBI:18420"/>
    </cofactor>
    <cofactor evidence="2">
        <name>Zn(2+)</name>
        <dbReference type="ChEBI" id="CHEBI:29105"/>
    </cofactor>
    <text evidence="2">Binds 1 divalent metal cation per subunit. Highest nucleotidase activity with Mn(2+), followed by Co(2+), Ni(2+) and Mg(2+). Highest exopolyphosphatase activity with Mg(2+), followed by Co(2+) and Zn(2+).</text>
</comment>
<comment type="activity regulation">
    <text evidence="2">Inhibited by various ribo- or deoxyribonucleoside 5'-triphosphates but is insensitive to nucleoside diphosphates.</text>
</comment>
<comment type="biophysicochemical properties">
    <kinetics>
        <KM evidence="2">0.32 mM for 5'-AMP</KM>
        <KM evidence="2">0.26 mM for 5'-GMP</KM>
        <KM evidence="2">0.28 mM for 5'-dGMP</KM>
        <KM evidence="2">0.1 mM for 3'-AMP</KM>
        <KM evidence="2">0.37 mM for 3'-CMP</KM>
        <KM evidence="2">2.49 mM for pNPP</KM>
        <KM evidence="2">0.02 mM for polyphosphate</KM>
        <Vmax evidence="2">10.0 umol/min/mg enzyme with 5'-AMP as substrate</Vmax>
        <Vmax evidence="2">22.4 umol/min/mg enzyme with 5'-GMP as substrate</Vmax>
        <Vmax evidence="2">16.4 umol/min/mg enzyme with 5'-dGMP as substrate</Vmax>
        <Vmax evidence="2">20.1 umol/min/mg enzyme with 3'-AMP as substrate</Vmax>
        <Vmax evidence="2">12.1 umol/min/mg enzyme with 3'-CMP as substrate</Vmax>
        <Vmax evidence="2">7.24 umol/min/mg enzyme with pNPP as substrate</Vmax>
        <Vmax evidence="2">0.1 umol/min/mg enzyme with polyphosphate as substrate</Vmax>
    </kinetics>
    <phDependence>
        <text evidence="2">Optimum pH is 7.0-7.2 for nucleotidase activity.</text>
    </phDependence>
</comment>
<comment type="subunit">
    <text evidence="2">Monomer and homooligomer in solution. The oligomeric complex consists of at least four subunits.</text>
</comment>
<comment type="subcellular location">
    <subcellularLocation>
        <location evidence="4">Cytoplasm</location>
    </subcellularLocation>
</comment>
<comment type="similarity">
    <text evidence="4">Belongs to the SurE nucleotidase family.</text>
</comment>
<comment type="caution">
    <text evidence="4">Was originally annotated as an acid phosphatase (EC 3.1.3.2).</text>
</comment>
<comment type="sequence caution" evidence="4">
    <conflict type="erroneous initiation">
        <sequence resource="EMBL-CDS" id="AAA69254"/>
    </conflict>
</comment>
<keyword id="KW-0170">Cobalt</keyword>
<keyword id="KW-0963">Cytoplasm</keyword>
<keyword id="KW-0378">Hydrolase</keyword>
<keyword id="KW-0460">Magnesium</keyword>
<keyword id="KW-0464">Manganese</keyword>
<keyword id="KW-0479">Metal-binding</keyword>
<keyword id="KW-0533">Nickel</keyword>
<keyword id="KW-0547">Nucleotide-binding</keyword>
<keyword id="KW-1185">Reference proteome</keyword>
<keyword id="KW-0862">Zinc</keyword>
<gene>
    <name type="primary">surE</name>
    <name type="synonym">ygbC</name>
    <name type="ordered locus">b2744</name>
    <name type="ordered locus">JW2714</name>
</gene>
<reference key="1">
    <citation type="journal article" date="1994" name="J. Bacteriol.">
        <title>A new gene involved in stationary-phase survival located at 59 minutes on the Escherichia coli chromosome.</title>
        <authorList>
            <person name="Li C."/>
            <person name="Ichikawa J.K."/>
            <person name="Ravetto J.J."/>
            <person name="Kuo H.-C."/>
            <person name="Fu J.C."/>
            <person name="Clarke S."/>
        </authorList>
    </citation>
    <scope>NUCLEOTIDE SEQUENCE [GENOMIC DNA]</scope>
    <source>
        <strain>MP180</strain>
    </source>
</reference>
<reference key="2">
    <citation type="submission" date="1995-10" db="EMBL/GenBank/DDBJ databases">
        <authorList>
            <person name="Ichikawa J.K."/>
        </authorList>
    </citation>
    <scope>SEQUENCE REVISION</scope>
</reference>
<reference key="3">
    <citation type="journal article" date="1997" name="Science">
        <title>The complete genome sequence of Escherichia coli K-12.</title>
        <authorList>
            <person name="Blattner F.R."/>
            <person name="Plunkett G. III"/>
            <person name="Bloch C.A."/>
            <person name="Perna N.T."/>
            <person name="Burland V."/>
            <person name="Riley M."/>
            <person name="Collado-Vides J."/>
            <person name="Glasner J.D."/>
            <person name="Rode C.K."/>
            <person name="Mayhew G.F."/>
            <person name="Gregor J."/>
            <person name="Davis N.W."/>
            <person name="Kirkpatrick H.A."/>
            <person name="Goeden M.A."/>
            <person name="Rose D.J."/>
            <person name="Mau B."/>
            <person name="Shao Y."/>
        </authorList>
    </citation>
    <scope>NUCLEOTIDE SEQUENCE [LARGE SCALE GENOMIC DNA]</scope>
    <source>
        <strain>K12 / MG1655 / ATCC 47076</strain>
    </source>
</reference>
<reference key="4">
    <citation type="journal article" date="2006" name="Mol. Syst. Biol.">
        <title>Highly accurate genome sequences of Escherichia coli K-12 strains MG1655 and W3110.</title>
        <authorList>
            <person name="Hayashi K."/>
            <person name="Morooka N."/>
            <person name="Yamamoto Y."/>
            <person name="Fujita K."/>
            <person name="Isono K."/>
            <person name="Choi S."/>
            <person name="Ohtsubo E."/>
            <person name="Baba T."/>
            <person name="Wanner B.L."/>
            <person name="Mori H."/>
            <person name="Horiuchi T."/>
        </authorList>
    </citation>
    <scope>NUCLEOTIDE SEQUENCE [LARGE SCALE GENOMIC DNA]</scope>
    <source>
        <strain>K12 / W3110 / ATCC 27325 / DSM 5911</strain>
    </source>
</reference>
<reference key="5">
    <citation type="journal article" date="2004" name="J. Biol. Chem.">
        <title>General enzymatic screens identify three new nucleotidases in Escherichia coli. Biochemical characterization of SurE, YfbR, and YjjG.</title>
        <authorList>
            <person name="Proudfoot M."/>
            <person name="Kuznetsova E."/>
            <person name="Brown G."/>
            <person name="Rao N.N."/>
            <person name="Kitagawa M."/>
            <person name="Mori H."/>
            <person name="Savchenko A."/>
            <person name="Yakunin A.F."/>
        </authorList>
    </citation>
    <scope>FUNCTION</scope>
    <scope>COFACTOR</scope>
    <scope>ACTIVITY REGULATION</scope>
    <scope>SUBUNIT</scope>
    <scope>BIOPHYSICOCHEMICAL PROPERTIES</scope>
    <scope>CATALYTIC ACTIVITY</scope>
</reference>
<protein>
    <recommendedName>
        <fullName evidence="4">5'/3'-nucleotidase SurE</fullName>
        <ecNumber evidence="2">3.1.3.5</ecNumber>
        <ecNumber evidence="2">3.1.3.6</ecNumber>
    </recommendedName>
    <alternativeName>
        <fullName>Exopolyphosphatase</fullName>
        <ecNumber evidence="2">3.6.1.11</ecNumber>
    </alternativeName>
    <alternativeName>
        <fullName>Nucleoside monophosphate phosphohydrolase</fullName>
    </alternativeName>
    <alternativeName>
        <fullName>Stationary-phase survival protein SurE</fullName>
    </alternativeName>
</protein>
<proteinExistence type="evidence at protein level"/>
<feature type="chain" id="PRO_0000111809" description="5'/3'-nucleotidase SurE">
    <location>
        <begin position="1"/>
        <end position="253"/>
    </location>
</feature>
<feature type="binding site" evidence="1">
    <location>
        <position position="8"/>
    </location>
    <ligand>
        <name>a divalent metal cation</name>
        <dbReference type="ChEBI" id="CHEBI:60240"/>
    </ligand>
</feature>
<feature type="binding site" evidence="1">
    <location>
        <position position="9"/>
    </location>
    <ligand>
        <name>a divalent metal cation</name>
        <dbReference type="ChEBI" id="CHEBI:60240"/>
    </ligand>
</feature>
<feature type="binding site" evidence="1">
    <location>
        <position position="39"/>
    </location>
    <ligand>
        <name>a divalent metal cation</name>
        <dbReference type="ChEBI" id="CHEBI:60240"/>
    </ligand>
</feature>
<feature type="binding site" evidence="1">
    <location>
        <position position="92"/>
    </location>
    <ligand>
        <name>a divalent metal cation</name>
        <dbReference type="ChEBI" id="CHEBI:60240"/>
    </ligand>
</feature>
<dbReference type="EC" id="3.1.3.5" evidence="2"/>
<dbReference type="EC" id="3.1.3.6" evidence="2"/>
<dbReference type="EC" id="3.6.1.11" evidence="2"/>
<dbReference type="EMBL" id="L07942">
    <property type="protein sequence ID" value="AAA79839.1"/>
    <property type="molecule type" value="Genomic_DNA"/>
</dbReference>
<dbReference type="EMBL" id="U29579">
    <property type="protein sequence ID" value="AAA69254.1"/>
    <property type="status" value="ALT_INIT"/>
    <property type="molecule type" value="Genomic_DNA"/>
</dbReference>
<dbReference type="EMBL" id="U00096">
    <property type="protein sequence ID" value="AAC75786.1"/>
    <property type="molecule type" value="Genomic_DNA"/>
</dbReference>
<dbReference type="EMBL" id="AP009048">
    <property type="protein sequence ID" value="BAE76821.1"/>
    <property type="molecule type" value="Genomic_DNA"/>
</dbReference>
<dbReference type="PIR" id="I69732">
    <property type="entry name" value="I69732"/>
</dbReference>
<dbReference type="RefSeq" id="NP_417224.1">
    <property type="nucleotide sequence ID" value="NC_000913.3"/>
</dbReference>
<dbReference type="RefSeq" id="WP_001295182.1">
    <property type="nucleotide sequence ID" value="NZ_SSZK01000017.1"/>
</dbReference>
<dbReference type="SMR" id="P0A840"/>
<dbReference type="BioGRID" id="4262277">
    <property type="interactions" value="15"/>
</dbReference>
<dbReference type="DIP" id="DIP-47982N"/>
<dbReference type="FunCoup" id="P0A840">
    <property type="interactions" value="305"/>
</dbReference>
<dbReference type="IntAct" id="P0A840">
    <property type="interactions" value="3"/>
</dbReference>
<dbReference type="STRING" id="511145.b2744"/>
<dbReference type="jPOST" id="P0A840"/>
<dbReference type="PaxDb" id="511145-b2744"/>
<dbReference type="EnsemblBacteria" id="AAC75786">
    <property type="protein sequence ID" value="AAC75786"/>
    <property type="gene ID" value="b2744"/>
</dbReference>
<dbReference type="GeneID" id="93779262"/>
<dbReference type="GeneID" id="947211"/>
<dbReference type="KEGG" id="ecj:JW2714"/>
<dbReference type="KEGG" id="eco:b2744"/>
<dbReference type="KEGG" id="ecoc:C3026_15090"/>
<dbReference type="PATRIC" id="fig|511145.12.peg.2839"/>
<dbReference type="EchoBASE" id="EB1764"/>
<dbReference type="eggNOG" id="COG0496">
    <property type="taxonomic scope" value="Bacteria"/>
</dbReference>
<dbReference type="HOGENOM" id="CLU_045192_1_2_6"/>
<dbReference type="InParanoid" id="P0A840"/>
<dbReference type="OMA" id="DCVHIAL"/>
<dbReference type="OrthoDB" id="9780815at2"/>
<dbReference type="PhylomeDB" id="P0A840"/>
<dbReference type="BioCyc" id="EcoCyc:EG11817-MONOMER"/>
<dbReference type="BioCyc" id="MetaCyc:EG11817-MONOMER"/>
<dbReference type="BRENDA" id="3.1.3.5">
    <property type="organism ID" value="2026"/>
</dbReference>
<dbReference type="BRENDA" id="3.1.3.6">
    <property type="organism ID" value="2026"/>
</dbReference>
<dbReference type="BRENDA" id="3.6.1.11">
    <property type="organism ID" value="2026"/>
</dbReference>
<dbReference type="SABIO-RK" id="P0A840"/>
<dbReference type="PRO" id="PR:P0A840"/>
<dbReference type="Proteomes" id="UP000000625">
    <property type="component" value="Chromosome"/>
</dbReference>
<dbReference type="GO" id="GO:0005737">
    <property type="term" value="C:cytoplasm"/>
    <property type="evidence" value="ECO:0007669"/>
    <property type="project" value="UniProtKB-SubCell"/>
</dbReference>
<dbReference type="GO" id="GO:0008254">
    <property type="term" value="F:3'-nucleotidase activity"/>
    <property type="evidence" value="ECO:0000314"/>
    <property type="project" value="EcoCyc"/>
</dbReference>
<dbReference type="GO" id="GO:0008253">
    <property type="term" value="F:5'-nucleotidase activity"/>
    <property type="evidence" value="ECO:0000314"/>
    <property type="project" value="EcoCyc"/>
</dbReference>
<dbReference type="GO" id="GO:0004309">
    <property type="term" value="F:exopolyphosphatase activity"/>
    <property type="evidence" value="ECO:0000314"/>
    <property type="project" value="EcoCyc"/>
</dbReference>
<dbReference type="GO" id="GO:0050484">
    <property type="term" value="F:GMP 5'-nucleotidase activity"/>
    <property type="evidence" value="ECO:0007669"/>
    <property type="project" value="RHEA"/>
</dbReference>
<dbReference type="GO" id="GO:0030145">
    <property type="term" value="F:manganese ion binding"/>
    <property type="evidence" value="ECO:0000314"/>
    <property type="project" value="EcoCyc"/>
</dbReference>
<dbReference type="GO" id="GO:0000166">
    <property type="term" value="F:nucleotide binding"/>
    <property type="evidence" value="ECO:0007669"/>
    <property type="project" value="UniProtKB-KW"/>
</dbReference>
<dbReference type="GO" id="GO:0046050">
    <property type="term" value="P:UMP catabolic process"/>
    <property type="evidence" value="ECO:0000316"/>
    <property type="project" value="EcoCyc"/>
</dbReference>
<dbReference type="FunFam" id="3.40.1210.10:FF:000001">
    <property type="entry name" value="5'/3'-nucleotidase SurE"/>
    <property type="match status" value="1"/>
</dbReference>
<dbReference type="Gene3D" id="3.40.1210.10">
    <property type="entry name" value="Survival protein SurE-like phosphatase/nucleotidase"/>
    <property type="match status" value="1"/>
</dbReference>
<dbReference type="HAMAP" id="MF_00060">
    <property type="entry name" value="SurE"/>
    <property type="match status" value="1"/>
</dbReference>
<dbReference type="InterPro" id="IPR030048">
    <property type="entry name" value="SurE"/>
</dbReference>
<dbReference type="InterPro" id="IPR002828">
    <property type="entry name" value="SurE-like_Pase/nucleotidase"/>
</dbReference>
<dbReference type="InterPro" id="IPR036523">
    <property type="entry name" value="SurE-like_sf"/>
</dbReference>
<dbReference type="NCBIfam" id="NF001488">
    <property type="entry name" value="PRK00346.1-1"/>
    <property type="match status" value="1"/>
</dbReference>
<dbReference type="NCBIfam" id="NF001489">
    <property type="entry name" value="PRK00346.1-3"/>
    <property type="match status" value="1"/>
</dbReference>
<dbReference type="NCBIfam" id="NF001490">
    <property type="entry name" value="PRK00346.1-4"/>
    <property type="match status" value="1"/>
</dbReference>
<dbReference type="NCBIfam" id="TIGR00087">
    <property type="entry name" value="surE"/>
    <property type="match status" value="1"/>
</dbReference>
<dbReference type="PANTHER" id="PTHR30457">
    <property type="entry name" value="5'-NUCLEOTIDASE SURE"/>
    <property type="match status" value="1"/>
</dbReference>
<dbReference type="PANTHER" id="PTHR30457:SF12">
    <property type="entry name" value="5'_3'-NUCLEOTIDASE SURE"/>
    <property type="match status" value="1"/>
</dbReference>
<dbReference type="Pfam" id="PF01975">
    <property type="entry name" value="SurE"/>
    <property type="match status" value="1"/>
</dbReference>
<dbReference type="SUPFAM" id="SSF64167">
    <property type="entry name" value="SurE-like"/>
    <property type="match status" value="1"/>
</dbReference>
<sequence>MRILLSNDDGVHAPGIQTLAKALREFADVQVVAPDRNRSGASNSLTLESSLRTFTFENGDIAVQMGTPTDCVYLGVNALMRPRPDIVVSGINAGPNLGDDVIYSGTVAAAMEGRHLGFPALAVSLDGHKHYDTAAAVTCSILRALCKEPLRTGRILNINVPDLPLDQIKGIRVTRCGTRHPADQVIPQQDPRGNTLYWIGPPGGKCDAGPGTDFAAVDEGYVSITPLHVDLTAHSAQDVVSDWLNSVGVGTQW</sequence>